<name>TXD15_MOUSE</name>
<gene>
    <name type="primary">Txndc15</name>
</gene>
<accession>Q6P6J9</accession>
<accession>Q52KM6</accession>
<accession>Q8BV80</accession>
<accession>Q8K319</accession>
<organism>
    <name type="scientific">Mus musculus</name>
    <name type="common">Mouse</name>
    <dbReference type="NCBI Taxonomy" id="10090"/>
    <lineage>
        <taxon>Eukaryota</taxon>
        <taxon>Metazoa</taxon>
        <taxon>Chordata</taxon>
        <taxon>Craniata</taxon>
        <taxon>Vertebrata</taxon>
        <taxon>Euteleostomi</taxon>
        <taxon>Mammalia</taxon>
        <taxon>Eutheria</taxon>
        <taxon>Euarchontoglires</taxon>
        <taxon>Glires</taxon>
        <taxon>Rodentia</taxon>
        <taxon>Myomorpha</taxon>
        <taxon>Muroidea</taxon>
        <taxon>Muridae</taxon>
        <taxon>Murinae</taxon>
        <taxon>Mus</taxon>
        <taxon>Mus</taxon>
    </lineage>
</organism>
<proteinExistence type="evidence at protein level"/>
<keyword id="KW-1003">Cell membrane</keyword>
<keyword id="KW-0966">Cell projection</keyword>
<keyword id="KW-0970">Cilium biogenesis/degradation</keyword>
<keyword id="KW-0325">Glycoprotein</keyword>
<keyword id="KW-0472">Membrane</keyword>
<keyword id="KW-1185">Reference proteome</keyword>
<keyword id="KW-0732">Signal</keyword>
<keyword id="KW-0812">Transmembrane</keyword>
<keyword id="KW-1133">Transmembrane helix</keyword>
<protein>
    <recommendedName>
        <fullName>Thioredoxin domain-containing protein 15</fullName>
    </recommendedName>
</protein>
<dbReference type="EMBL" id="AK079517">
    <property type="protein sequence ID" value="BAC37669.1"/>
    <property type="status" value="ALT_INIT"/>
    <property type="molecule type" value="mRNA"/>
</dbReference>
<dbReference type="EMBL" id="AK160051">
    <property type="protein sequence ID" value="BAE35591.1"/>
    <property type="molecule type" value="mRNA"/>
</dbReference>
<dbReference type="EMBL" id="AK167701">
    <property type="protein sequence ID" value="BAE39745.1"/>
    <property type="molecule type" value="mRNA"/>
</dbReference>
<dbReference type="EMBL" id="AK167838">
    <property type="protein sequence ID" value="BAE39859.1"/>
    <property type="molecule type" value="mRNA"/>
</dbReference>
<dbReference type="EMBL" id="AK167977">
    <property type="protein sequence ID" value="BAE39969.1"/>
    <property type="molecule type" value="mRNA"/>
</dbReference>
<dbReference type="EMBL" id="BC029015">
    <property type="protein sequence ID" value="AAH29015.1"/>
    <property type="molecule type" value="mRNA"/>
</dbReference>
<dbReference type="EMBL" id="BC062180">
    <property type="protein sequence ID" value="AAH62180.1"/>
    <property type="molecule type" value="mRNA"/>
</dbReference>
<dbReference type="EMBL" id="BC094275">
    <property type="protein sequence ID" value="AAH94275.1"/>
    <property type="molecule type" value="mRNA"/>
</dbReference>
<dbReference type="CCDS" id="CCDS26553.1"/>
<dbReference type="RefSeq" id="NP_780359.2">
    <property type="nucleotide sequence ID" value="NM_175150.3"/>
</dbReference>
<dbReference type="SMR" id="Q6P6J9"/>
<dbReference type="FunCoup" id="Q6P6J9">
    <property type="interactions" value="713"/>
</dbReference>
<dbReference type="STRING" id="10090.ENSMUSP00000021959"/>
<dbReference type="GlyConnect" id="2764">
    <property type="glycosylation" value="5 N-Linked glycans (3 sites)"/>
</dbReference>
<dbReference type="GlyCosmos" id="Q6P6J9">
    <property type="glycosylation" value="6 sites, 5 glycans"/>
</dbReference>
<dbReference type="GlyGen" id="Q6P6J9">
    <property type="glycosylation" value="7 sites, 10 N-linked glycans (5 sites)"/>
</dbReference>
<dbReference type="iPTMnet" id="Q6P6J9"/>
<dbReference type="PhosphoSitePlus" id="Q6P6J9"/>
<dbReference type="SwissPalm" id="Q6P6J9"/>
<dbReference type="PaxDb" id="10090-ENSMUSP00000021959"/>
<dbReference type="PeptideAtlas" id="Q6P6J9"/>
<dbReference type="ProteomicsDB" id="298392"/>
<dbReference type="Pumba" id="Q6P6J9"/>
<dbReference type="Antibodypedia" id="2125">
    <property type="antibodies" value="77 antibodies from 14 providers"/>
</dbReference>
<dbReference type="Ensembl" id="ENSMUST00000021959.11">
    <property type="protein sequence ID" value="ENSMUSP00000021959.10"/>
    <property type="gene ID" value="ENSMUSG00000021497.11"/>
</dbReference>
<dbReference type="GeneID" id="69672"/>
<dbReference type="KEGG" id="mmu:69672"/>
<dbReference type="UCSC" id="uc007qry.2">
    <property type="organism name" value="mouse"/>
</dbReference>
<dbReference type="AGR" id="MGI:1916922"/>
<dbReference type="CTD" id="79770"/>
<dbReference type="MGI" id="MGI:1916922">
    <property type="gene designation" value="Txndc15"/>
</dbReference>
<dbReference type="VEuPathDB" id="HostDB:ENSMUSG00000021497"/>
<dbReference type="eggNOG" id="KOG2640">
    <property type="taxonomic scope" value="Eukaryota"/>
</dbReference>
<dbReference type="GeneTree" id="ENSGT00390000002845"/>
<dbReference type="HOGENOM" id="CLU_050221_0_0_1"/>
<dbReference type="InParanoid" id="Q6P6J9"/>
<dbReference type="OMA" id="TCEERNV"/>
<dbReference type="OrthoDB" id="1899781at2759"/>
<dbReference type="PhylomeDB" id="Q6P6J9"/>
<dbReference type="TreeFam" id="TF323528"/>
<dbReference type="BioGRID-ORCS" id="69672">
    <property type="hits" value="3 hits in 77 CRISPR screens"/>
</dbReference>
<dbReference type="ChiTaRS" id="Txndc15">
    <property type="organism name" value="mouse"/>
</dbReference>
<dbReference type="PRO" id="PR:Q6P6J9"/>
<dbReference type="Proteomes" id="UP000000589">
    <property type="component" value="Chromosome 13"/>
</dbReference>
<dbReference type="RNAct" id="Q6P6J9">
    <property type="molecule type" value="protein"/>
</dbReference>
<dbReference type="Bgee" id="ENSMUSG00000021497">
    <property type="expression patterns" value="Expressed in otolith organ and 226 other cell types or tissues"/>
</dbReference>
<dbReference type="GO" id="GO:0060170">
    <property type="term" value="C:ciliary membrane"/>
    <property type="evidence" value="ECO:0007669"/>
    <property type="project" value="UniProtKB-SubCell"/>
</dbReference>
<dbReference type="GO" id="GO:0005929">
    <property type="term" value="C:cilium"/>
    <property type="evidence" value="ECO:0000314"/>
    <property type="project" value="UniProtKB"/>
</dbReference>
<dbReference type="GO" id="GO:0060271">
    <property type="term" value="P:cilium assembly"/>
    <property type="evidence" value="ECO:0000314"/>
    <property type="project" value="UniProtKB"/>
</dbReference>
<dbReference type="GO" id="GO:0045880">
    <property type="term" value="P:positive regulation of smoothened signaling pathway"/>
    <property type="evidence" value="ECO:0000315"/>
    <property type="project" value="UniProtKB"/>
</dbReference>
<dbReference type="CDD" id="cd02999">
    <property type="entry name" value="PDI_a_ERp44_like"/>
    <property type="match status" value="1"/>
</dbReference>
<dbReference type="Gene3D" id="3.40.30.10">
    <property type="entry name" value="Glutaredoxin"/>
    <property type="match status" value="1"/>
</dbReference>
<dbReference type="InterPro" id="IPR036249">
    <property type="entry name" value="Thioredoxin-like_sf"/>
</dbReference>
<dbReference type="InterPro" id="IPR013766">
    <property type="entry name" value="Thioredoxin_domain"/>
</dbReference>
<dbReference type="InterPro" id="IPR042418">
    <property type="entry name" value="TXNDC15"/>
</dbReference>
<dbReference type="PANTHER" id="PTHR14684">
    <property type="entry name" value="THIOREDOXIN DOMAIN-CONTAINING PROTEIN 15"/>
    <property type="match status" value="1"/>
</dbReference>
<dbReference type="PANTHER" id="PTHR14684:SF2">
    <property type="entry name" value="THIOREDOXIN DOMAIN-CONTAINING PROTEIN 15"/>
    <property type="match status" value="1"/>
</dbReference>
<dbReference type="Pfam" id="PF00085">
    <property type="entry name" value="Thioredoxin"/>
    <property type="match status" value="1"/>
</dbReference>
<dbReference type="SUPFAM" id="SSF52833">
    <property type="entry name" value="Thioredoxin-like"/>
    <property type="match status" value="1"/>
</dbReference>
<dbReference type="PROSITE" id="PS51352">
    <property type="entry name" value="THIOREDOXIN_2"/>
    <property type="match status" value="1"/>
</dbReference>
<comment type="function">
    <text evidence="5">Acts as a positive regulator of ciliary hedgehog signaling (PubMed:29459677). Required for cilia biogenesis (PubMed:29459677).</text>
</comment>
<comment type="subcellular location">
    <subcellularLocation>
        <location evidence="7">Cell projection</location>
        <location evidence="7">Cilium membrane</location>
        <topology evidence="1">Single-pass type I membrane protein</topology>
    </subcellularLocation>
</comment>
<comment type="sequence caution" evidence="6">
    <conflict type="erroneous initiation">
        <sequence resource="EMBL-CDS" id="BAC37669"/>
    </conflict>
</comment>
<feature type="signal peptide" evidence="1">
    <location>
        <begin position="1"/>
        <end position="20"/>
    </location>
</feature>
<feature type="chain" id="PRO_0000296095" description="Thioredoxin domain-containing protein 15">
    <location>
        <begin position="21"/>
        <end position="344"/>
    </location>
</feature>
<feature type="topological domain" description="Extracellular" evidence="1">
    <location>
        <begin position="21"/>
        <end position="305"/>
    </location>
</feature>
<feature type="transmembrane region" description="Helical" evidence="1">
    <location>
        <begin position="306"/>
        <end position="326"/>
    </location>
</feature>
<feature type="topological domain" description="Cytoplasmic" evidence="1">
    <location>
        <begin position="327"/>
        <end position="344"/>
    </location>
</feature>
<feature type="domain" description="Thioredoxin" evidence="2">
    <location>
        <begin position="163"/>
        <end position="280"/>
    </location>
</feature>
<feature type="region of interest" description="Disordered" evidence="3">
    <location>
        <begin position="55"/>
        <end position="119"/>
    </location>
</feature>
<feature type="region of interest" description="Disordered" evidence="3">
    <location>
        <begin position="136"/>
        <end position="156"/>
    </location>
</feature>
<feature type="compositionally biased region" description="Basic and acidic residues" evidence="3">
    <location>
        <begin position="88"/>
        <end position="97"/>
    </location>
</feature>
<feature type="glycosylation site" description="N-linked (GlcNAc...) asparagine" evidence="1">
    <location>
        <position position="171"/>
    </location>
</feature>
<feature type="glycosylation site" description="N-linked (GlcNAc...) asparagine" evidence="1">
    <location>
        <position position="178"/>
    </location>
</feature>
<feature type="glycosylation site" description="N-linked (GlcNAc...) asparagine" evidence="1">
    <location>
        <position position="190"/>
    </location>
</feature>
<feature type="glycosylation site" description="N-linked (GlcNAc...) asparagine" evidence="4">
    <location>
        <position position="277"/>
    </location>
</feature>
<sequence>MQLLCWWQVLLWVLGLPAHGLEVAEDSGHPWREERPVPALQVGAVYLHEEEVAQDHRDQARAAEPMEASLGPRGDPMVVLSVVPGAAEDQRSPEAHDGTCSAQGEEDPSCGRENLFGLQGAGGFQDREEEYYAEPGVTEAEPVATEDANSTDSLKSPKVNCEERNVTGLENFTLKILNMSQDLMDFLNPNGSDCTLVLFYTPWCRFSASLAPHFNSLPRAFPTLGFLALDASQHSSLSTRFGTVAVPNILLFQGAKPMARFNHTDRTLETLKIFIFNQTGIEAKKNVVVTQADQMGPLPSTLIKTVDWLLVFSLFFLISFIMYATIRTESIRWLIPGQEQEHAE</sequence>
<evidence type="ECO:0000255" key="1"/>
<evidence type="ECO:0000255" key="2">
    <source>
        <dbReference type="PROSITE-ProRule" id="PRU00691"/>
    </source>
</evidence>
<evidence type="ECO:0000256" key="3">
    <source>
        <dbReference type="SAM" id="MobiDB-lite"/>
    </source>
</evidence>
<evidence type="ECO:0000269" key="4">
    <source>
    </source>
</evidence>
<evidence type="ECO:0000269" key="5">
    <source>
    </source>
</evidence>
<evidence type="ECO:0000305" key="6"/>
<evidence type="ECO:0000305" key="7">
    <source>
    </source>
</evidence>
<reference key="1">
    <citation type="journal article" date="2005" name="Science">
        <title>The transcriptional landscape of the mammalian genome.</title>
        <authorList>
            <person name="Carninci P."/>
            <person name="Kasukawa T."/>
            <person name="Katayama S."/>
            <person name="Gough J."/>
            <person name="Frith M.C."/>
            <person name="Maeda N."/>
            <person name="Oyama R."/>
            <person name="Ravasi T."/>
            <person name="Lenhard B."/>
            <person name="Wells C."/>
            <person name="Kodzius R."/>
            <person name="Shimokawa K."/>
            <person name="Bajic V.B."/>
            <person name="Brenner S.E."/>
            <person name="Batalov S."/>
            <person name="Forrest A.R."/>
            <person name="Zavolan M."/>
            <person name="Davis M.J."/>
            <person name="Wilming L.G."/>
            <person name="Aidinis V."/>
            <person name="Allen J.E."/>
            <person name="Ambesi-Impiombato A."/>
            <person name="Apweiler R."/>
            <person name="Aturaliya R.N."/>
            <person name="Bailey T.L."/>
            <person name="Bansal M."/>
            <person name="Baxter L."/>
            <person name="Beisel K.W."/>
            <person name="Bersano T."/>
            <person name="Bono H."/>
            <person name="Chalk A.M."/>
            <person name="Chiu K.P."/>
            <person name="Choudhary V."/>
            <person name="Christoffels A."/>
            <person name="Clutterbuck D.R."/>
            <person name="Crowe M.L."/>
            <person name="Dalla E."/>
            <person name="Dalrymple B.P."/>
            <person name="de Bono B."/>
            <person name="Della Gatta G."/>
            <person name="di Bernardo D."/>
            <person name="Down T."/>
            <person name="Engstrom P."/>
            <person name="Fagiolini M."/>
            <person name="Faulkner G."/>
            <person name="Fletcher C.F."/>
            <person name="Fukushima T."/>
            <person name="Furuno M."/>
            <person name="Futaki S."/>
            <person name="Gariboldi M."/>
            <person name="Georgii-Hemming P."/>
            <person name="Gingeras T.R."/>
            <person name="Gojobori T."/>
            <person name="Green R.E."/>
            <person name="Gustincich S."/>
            <person name="Harbers M."/>
            <person name="Hayashi Y."/>
            <person name="Hensch T.K."/>
            <person name="Hirokawa N."/>
            <person name="Hill D."/>
            <person name="Huminiecki L."/>
            <person name="Iacono M."/>
            <person name="Ikeo K."/>
            <person name="Iwama A."/>
            <person name="Ishikawa T."/>
            <person name="Jakt M."/>
            <person name="Kanapin A."/>
            <person name="Katoh M."/>
            <person name="Kawasawa Y."/>
            <person name="Kelso J."/>
            <person name="Kitamura H."/>
            <person name="Kitano H."/>
            <person name="Kollias G."/>
            <person name="Krishnan S.P."/>
            <person name="Kruger A."/>
            <person name="Kummerfeld S.K."/>
            <person name="Kurochkin I.V."/>
            <person name="Lareau L.F."/>
            <person name="Lazarevic D."/>
            <person name="Lipovich L."/>
            <person name="Liu J."/>
            <person name="Liuni S."/>
            <person name="McWilliam S."/>
            <person name="Madan Babu M."/>
            <person name="Madera M."/>
            <person name="Marchionni L."/>
            <person name="Matsuda H."/>
            <person name="Matsuzawa S."/>
            <person name="Miki H."/>
            <person name="Mignone F."/>
            <person name="Miyake S."/>
            <person name="Morris K."/>
            <person name="Mottagui-Tabar S."/>
            <person name="Mulder N."/>
            <person name="Nakano N."/>
            <person name="Nakauchi H."/>
            <person name="Ng P."/>
            <person name="Nilsson R."/>
            <person name="Nishiguchi S."/>
            <person name="Nishikawa S."/>
            <person name="Nori F."/>
            <person name="Ohara O."/>
            <person name="Okazaki Y."/>
            <person name="Orlando V."/>
            <person name="Pang K.C."/>
            <person name="Pavan W.J."/>
            <person name="Pavesi G."/>
            <person name="Pesole G."/>
            <person name="Petrovsky N."/>
            <person name="Piazza S."/>
            <person name="Reed J."/>
            <person name="Reid J.F."/>
            <person name="Ring B.Z."/>
            <person name="Ringwald M."/>
            <person name="Rost B."/>
            <person name="Ruan Y."/>
            <person name="Salzberg S.L."/>
            <person name="Sandelin A."/>
            <person name="Schneider C."/>
            <person name="Schoenbach C."/>
            <person name="Sekiguchi K."/>
            <person name="Semple C.A."/>
            <person name="Seno S."/>
            <person name="Sessa L."/>
            <person name="Sheng Y."/>
            <person name="Shibata Y."/>
            <person name="Shimada H."/>
            <person name="Shimada K."/>
            <person name="Silva D."/>
            <person name="Sinclair B."/>
            <person name="Sperling S."/>
            <person name="Stupka E."/>
            <person name="Sugiura K."/>
            <person name="Sultana R."/>
            <person name="Takenaka Y."/>
            <person name="Taki K."/>
            <person name="Tammoja K."/>
            <person name="Tan S.L."/>
            <person name="Tang S."/>
            <person name="Taylor M.S."/>
            <person name="Tegner J."/>
            <person name="Teichmann S.A."/>
            <person name="Ueda H.R."/>
            <person name="van Nimwegen E."/>
            <person name="Verardo R."/>
            <person name="Wei C.L."/>
            <person name="Yagi K."/>
            <person name="Yamanishi H."/>
            <person name="Zabarovsky E."/>
            <person name="Zhu S."/>
            <person name="Zimmer A."/>
            <person name="Hide W."/>
            <person name="Bult C."/>
            <person name="Grimmond S.M."/>
            <person name="Teasdale R.D."/>
            <person name="Liu E.T."/>
            <person name="Brusic V."/>
            <person name="Quackenbush J."/>
            <person name="Wahlestedt C."/>
            <person name="Mattick J.S."/>
            <person name="Hume D.A."/>
            <person name="Kai C."/>
            <person name="Sasaki D."/>
            <person name="Tomaru Y."/>
            <person name="Fukuda S."/>
            <person name="Kanamori-Katayama M."/>
            <person name="Suzuki M."/>
            <person name="Aoki J."/>
            <person name="Arakawa T."/>
            <person name="Iida J."/>
            <person name="Imamura K."/>
            <person name="Itoh M."/>
            <person name="Kato T."/>
            <person name="Kawaji H."/>
            <person name="Kawagashira N."/>
            <person name="Kawashima T."/>
            <person name="Kojima M."/>
            <person name="Kondo S."/>
            <person name="Konno H."/>
            <person name="Nakano K."/>
            <person name="Ninomiya N."/>
            <person name="Nishio T."/>
            <person name="Okada M."/>
            <person name="Plessy C."/>
            <person name="Shibata K."/>
            <person name="Shiraki T."/>
            <person name="Suzuki S."/>
            <person name="Tagami M."/>
            <person name="Waki K."/>
            <person name="Watahiki A."/>
            <person name="Okamura-Oho Y."/>
            <person name="Suzuki H."/>
            <person name="Kawai J."/>
            <person name="Hayashizaki Y."/>
        </authorList>
    </citation>
    <scope>NUCLEOTIDE SEQUENCE [LARGE SCALE MRNA]</scope>
    <source>
        <strain>C57BL/6J</strain>
        <strain>DBA/2J</strain>
        <tissue>Placenta</tissue>
        <tissue>Thymus</tissue>
    </source>
</reference>
<reference key="2">
    <citation type="journal article" date="2004" name="Genome Res.">
        <title>The status, quality, and expansion of the NIH full-length cDNA project: the Mammalian Gene Collection (MGC).</title>
        <authorList>
            <consortium name="The MGC Project Team"/>
        </authorList>
    </citation>
    <scope>NUCLEOTIDE SEQUENCE [LARGE SCALE MRNA]</scope>
    <source>
        <strain>FVB/N-3</strain>
        <tissue>Embryo</tissue>
        <tissue>Mammary tumor</tissue>
    </source>
</reference>
<reference key="3">
    <citation type="journal article" date="2009" name="Nat. Biotechnol.">
        <title>Mass-spectrometric identification and relative quantification of N-linked cell surface glycoproteins.</title>
        <authorList>
            <person name="Wollscheid B."/>
            <person name="Bausch-Fluck D."/>
            <person name="Henderson C."/>
            <person name="O'Brien R."/>
            <person name="Bibel M."/>
            <person name="Schiess R."/>
            <person name="Aebersold R."/>
            <person name="Watts J.D."/>
        </authorList>
    </citation>
    <scope>GLYCOSYLATION [LARGE SCALE ANALYSIS] AT ASN-277</scope>
</reference>
<reference key="4">
    <citation type="journal article" date="2018" name="Nat. Genet.">
        <title>A CRISPR-based screen for Hedgehog signaling provides insights into ciliary function and ciliopathies.</title>
        <authorList>
            <person name="Breslow D.K."/>
            <person name="Hoogendoorn S."/>
            <person name="Kopp A.R."/>
            <person name="Morgens D.W."/>
            <person name="Vu B.K."/>
            <person name="Kennedy M.C."/>
            <person name="Han K."/>
            <person name="Li A."/>
            <person name="Hess G.T."/>
            <person name="Bassik M.C."/>
            <person name="Chen J.K."/>
            <person name="Nachury M.V."/>
        </authorList>
    </citation>
    <scope>SUBCELLULAR LOCATION</scope>
    <scope>FUNCTION</scope>
</reference>